<protein>
    <recommendedName>
        <fullName evidence="8">Testis-expressed protein 101</fullName>
    </recommendedName>
    <alternativeName>
        <fullName>Cell surface receptor NYD-SP8</fullName>
    </alternativeName>
    <alternativeName>
        <fullName>Scleroderma-associated autoantigen</fullName>
    </alternativeName>
    <alternativeName>
        <fullName>Spermatogenesis-related gene protein</fullName>
    </alternativeName>
</protein>
<keyword id="KW-0002">3D-structure</keyword>
<keyword id="KW-0025">Alternative splicing</keyword>
<keyword id="KW-1003">Cell membrane</keyword>
<keyword id="KW-0968">Cytoplasmic vesicle</keyword>
<keyword id="KW-0325">Glycoprotein</keyword>
<keyword id="KW-0336">GPI-anchor</keyword>
<keyword id="KW-0449">Lipoprotein</keyword>
<keyword id="KW-0472">Membrane</keyword>
<keyword id="KW-1267">Proteomics identification</keyword>
<keyword id="KW-1185">Reference proteome</keyword>
<keyword id="KW-0964">Secreted</keyword>
<keyword id="KW-0732">Signal</keyword>
<accession>Q9BY14</accession>
<accession>Q7L5R2</accession>
<accession>Q9BPY7</accession>
<dbReference type="EMBL" id="AF241268">
    <property type="protein sequence ID" value="AAK28327.1"/>
    <property type="molecule type" value="mRNA"/>
</dbReference>
<dbReference type="EMBL" id="AY014285">
    <property type="protein sequence ID" value="AAK27310.1"/>
    <property type="molecule type" value="mRNA"/>
</dbReference>
<dbReference type="EMBL" id="AF353396">
    <property type="protein sequence ID" value="AAK38662.1"/>
    <property type="molecule type" value="mRNA"/>
</dbReference>
<dbReference type="EMBL" id="AY359077">
    <property type="protein sequence ID" value="AAQ89436.1"/>
    <property type="molecule type" value="mRNA"/>
</dbReference>
<dbReference type="EMBL" id="BC001861">
    <property type="protein sequence ID" value="AAH01861.2"/>
    <property type="molecule type" value="mRNA"/>
</dbReference>
<dbReference type="CCDS" id="CCDS12619.1">
    <molecule id="Q9BY14-2"/>
</dbReference>
<dbReference type="CCDS" id="CCDS59393.1">
    <molecule id="Q9BY14-1"/>
</dbReference>
<dbReference type="RefSeq" id="NP_001123483.1">
    <molecule id="Q9BY14-1"/>
    <property type="nucleotide sequence ID" value="NM_001130011.3"/>
</dbReference>
<dbReference type="RefSeq" id="NP_113639.4">
    <molecule id="Q9BY14-2"/>
    <property type="nucleotide sequence ID" value="NM_031451.4"/>
</dbReference>
<dbReference type="PDB" id="7BPR">
    <property type="method" value="X-ray"/>
    <property type="resolution" value="1.95 A"/>
    <property type="chains" value="A/B=26-222"/>
</dbReference>
<dbReference type="PDBsum" id="7BPR"/>
<dbReference type="SMR" id="Q9BY14"/>
<dbReference type="BioGRID" id="123703">
    <property type="interactions" value="255"/>
</dbReference>
<dbReference type="FunCoup" id="Q9BY14">
    <property type="interactions" value="89"/>
</dbReference>
<dbReference type="IntAct" id="Q9BY14">
    <property type="interactions" value="269"/>
</dbReference>
<dbReference type="STRING" id="9606.ENSP00000472308"/>
<dbReference type="GlyCosmos" id="Q9BY14">
    <property type="glycosylation" value="2 sites, No reported glycans"/>
</dbReference>
<dbReference type="GlyGen" id="Q9BY14">
    <property type="glycosylation" value="2 sites"/>
</dbReference>
<dbReference type="iPTMnet" id="Q9BY14"/>
<dbReference type="PhosphoSitePlus" id="Q9BY14"/>
<dbReference type="BioMuta" id="TEX101"/>
<dbReference type="DMDM" id="110816451"/>
<dbReference type="MassIVE" id="Q9BY14"/>
<dbReference type="PaxDb" id="9606-ENSP00000472308"/>
<dbReference type="PeptideAtlas" id="Q9BY14"/>
<dbReference type="ProteomicsDB" id="79563">
    <molecule id="Q9BY14-1"/>
</dbReference>
<dbReference type="ProteomicsDB" id="79564">
    <molecule id="Q9BY14-2"/>
</dbReference>
<dbReference type="Antibodypedia" id="31041">
    <property type="antibodies" value="45 antibodies from 18 providers"/>
</dbReference>
<dbReference type="DNASU" id="83639"/>
<dbReference type="Ensembl" id="ENST00000598265.2">
    <molecule id="Q9BY14-1"/>
    <property type="protein sequence ID" value="ENSP00000472769.1"/>
    <property type="gene ID" value="ENSG00000131126.19"/>
</dbReference>
<dbReference type="Ensembl" id="ENST00000602198.5">
    <molecule id="Q9BY14-2"/>
    <property type="protein sequence ID" value="ENSP00000472308.1"/>
    <property type="gene ID" value="ENSG00000131126.19"/>
</dbReference>
<dbReference type="GeneID" id="83639"/>
<dbReference type="KEGG" id="hsa:83639"/>
<dbReference type="MANE-Select" id="ENST00000598265.2">
    <property type="protein sequence ID" value="ENSP00000472769.1"/>
    <property type="RefSeq nucleotide sequence ID" value="NM_001130011.3"/>
    <property type="RefSeq protein sequence ID" value="NP_001123483.1"/>
</dbReference>
<dbReference type="UCSC" id="uc010xwo.3">
    <molecule id="Q9BY14-1"/>
    <property type="organism name" value="human"/>
</dbReference>
<dbReference type="AGR" id="HGNC:30722"/>
<dbReference type="CTD" id="83639"/>
<dbReference type="DisGeNET" id="83639"/>
<dbReference type="GeneCards" id="TEX101"/>
<dbReference type="HGNC" id="HGNC:30722">
    <property type="gene designation" value="TEX101"/>
</dbReference>
<dbReference type="HPA" id="ENSG00000131126">
    <property type="expression patterns" value="Tissue enriched (testis)"/>
</dbReference>
<dbReference type="MIM" id="612665">
    <property type="type" value="gene"/>
</dbReference>
<dbReference type="neXtProt" id="NX_Q9BY14"/>
<dbReference type="OpenTargets" id="ENSG00000131126"/>
<dbReference type="PharmGKB" id="PA134938764"/>
<dbReference type="VEuPathDB" id="HostDB:ENSG00000131126"/>
<dbReference type="eggNOG" id="ENOG502T90B">
    <property type="taxonomic scope" value="Eukaryota"/>
</dbReference>
<dbReference type="GeneTree" id="ENSGT00530000063351"/>
<dbReference type="HOGENOM" id="CLU_077973_0_0_1"/>
<dbReference type="InParanoid" id="Q9BY14"/>
<dbReference type="OMA" id="QETVLMI"/>
<dbReference type="OrthoDB" id="9443273at2759"/>
<dbReference type="PAN-GO" id="Q9BY14">
    <property type="GO annotations" value="4 GO annotations based on evolutionary models"/>
</dbReference>
<dbReference type="PhylomeDB" id="Q9BY14"/>
<dbReference type="TreeFam" id="TF337286"/>
<dbReference type="PathwayCommons" id="Q9BY14"/>
<dbReference type="Reactome" id="R-HSA-163125">
    <property type="pathway name" value="Post-translational modification: synthesis of GPI-anchored proteins"/>
</dbReference>
<dbReference type="SignaLink" id="Q9BY14"/>
<dbReference type="BioGRID-ORCS" id="83639">
    <property type="hits" value="17 hits in 1142 CRISPR screens"/>
</dbReference>
<dbReference type="ChiTaRS" id="TEX101">
    <property type="organism name" value="human"/>
</dbReference>
<dbReference type="GenomeRNAi" id="83639"/>
<dbReference type="Pharos" id="Q9BY14">
    <property type="development level" value="Tbio"/>
</dbReference>
<dbReference type="PRO" id="PR:Q9BY14"/>
<dbReference type="Proteomes" id="UP000005640">
    <property type="component" value="Chromosome 19"/>
</dbReference>
<dbReference type="RNAct" id="Q9BY14">
    <property type="molecule type" value="protein"/>
</dbReference>
<dbReference type="Bgee" id="ENSG00000131126">
    <property type="expression patterns" value="Expressed in right testis and 122 other cell types or tissues"/>
</dbReference>
<dbReference type="ExpressionAtlas" id="Q9BY14">
    <property type="expression patterns" value="baseline and differential"/>
</dbReference>
<dbReference type="GO" id="GO:0002080">
    <property type="term" value="C:acrosomal membrane"/>
    <property type="evidence" value="ECO:0007669"/>
    <property type="project" value="Ensembl"/>
</dbReference>
<dbReference type="GO" id="GO:0001669">
    <property type="term" value="C:acrosomal vesicle"/>
    <property type="evidence" value="ECO:0000250"/>
    <property type="project" value="UniProtKB"/>
</dbReference>
<dbReference type="GO" id="GO:0005576">
    <property type="term" value="C:extracellular region"/>
    <property type="evidence" value="ECO:0000250"/>
    <property type="project" value="UniProtKB"/>
</dbReference>
<dbReference type="GO" id="GO:0005886">
    <property type="term" value="C:plasma membrane"/>
    <property type="evidence" value="ECO:0000250"/>
    <property type="project" value="UniProtKB"/>
</dbReference>
<dbReference type="GO" id="GO:0044853">
    <property type="term" value="C:plasma membrane raft"/>
    <property type="evidence" value="ECO:0000318"/>
    <property type="project" value="GO_Central"/>
</dbReference>
<dbReference type="GO" id="GO:0098552">
    <property type="term" value="C:side of membrane"/>
    <property type="evidence" value="ECO:0007669"/>
    <property type="project" value="UniProtKB-KW"/>
</dbReference>
<dbReference type="GO" id="GO:0007339">
    <property type="term" value="P:binding of sperm to zona pellucida"/>
    <property type="evidence" value="ECO:0000250"/>
    <property type="project" value="UniProtKB"/>
</dbReference>
<dbReference type="GO" id="GO:0009566">
    <property type="term" value="P:fertilization"/>
    <property type="evidence" value="ECO:0000250"/>
    <property type="project" value="UniProtKB"/>
</dbReference>
<dbReference type="GO" id="GO:0030317">
    <property type="term" value="P:flagellated sperm motility"/>
    <property type="evidence" value="ECO:0000250"/>
    <property type="project" value="UniProtKB"/>
</dbReference>
<dbReference type="GO" id="GO:1901317">
    <property type="term" value="P:regulation of flagellated sperm motility"/>
    <property type="evidence" value="ECO:0000250"/>
    <property type="project" value="UniProtKB"/>
</dbReference>
<dbReference type="CDD" id="cd23622">
    <property type="entry name" value="TFP_LU_ECD_TEX101_rpt1"/>
    <property type="match status" value="1"/>
</dbReference>
<dbReference type="CDD" id="cd23634">
    <property type="entry name" value="TFP_LU_ECD_TEX101_rpt2"/>
    <property type="match status" value="1"/>
</dbReference>
<dbReference type="InterPro" id="IPR051899">
    <property type="entry name" value="Fert-Immune_med_protein"/>
</dbReference>
<dbReference type="InterPro" id="IPR016054">
    <property type="entry name" value="LY6_UPA_recep-like"/>
</dbReference>
<dbReference type="InterPro" id="IPR045860">
    <property type="entry name" value="Snake_toxin-like_sf"/>
</dbReference>
<dbReference type="PANTHER" id="PTHR16529">
    <property type="entry name" value="CD177 ANTIGEN"/>
    <property type="match status" value="1"/>
</dbReference>
<dbReference type="PANTHER" id="PTHR16529:SF3">
    <property type="entry name" value="TESTIS-EXPRESSED PROTEIN 101"/>
    <property type="match status" value="1"/>
</dbReference>
<dbReference type="Pfam" id="PF00021">
    <property type="entry name" value="UPAR_LY6"/>
    <property type="match status" value="2"/>
</dbReference>
<dbReference type="SUPFAM" id="SSF57302">
    <property type="entry name" value="Snake toxin-like"/>
    <property type="match status" value="1"/>
</dbReference>
<gene>
    <name evidence="9" type="primary">TEX101</name>
    <name type="synonym">SGRG</name>
    <name type="ORF">UNQ867/PRO1884</name>
</gene>
<name>TX101_HUMAN</name>
<comment type="function">
    <text evidence="2 3">Plays a role in fertilization by controlling binding of sperm to zona pellucida and migration of spermatozoa into the oviduct (By similarity). May play a role in signal transduction and promote protein tyrosine phosphorylation (By similarity).</text>
</comment>
<comment type="subunit">
    <text evidence="3">Interacts with VAMP3. Interacts with LY6K. Interacts with DPEP3; co-localized on the cell surface of spermatocytes, spermatids, and testicular spermatozoa, co-localized only in cytoplasmic droplets of caput and corpus epididymal sperm. Interacts with ADAM5.</text>
</comment>
<comment type="interaction">
    <interactant intactId="EBI-12306161">
        <id>Q9BY14-2</id>
    </interactant>
    <interactant intactId="EBI-11959635">
        <id>Q9P2G9-2</id>
        <label>KLHL8</label>
    </interactant>
    <organismsDiffer>false</organismsDiffer>
    <experiments>3</experiments>
</comment>
<comment type="interaction">
    <interactant intactId="EBI-12306161">
        <id>Q9BY14-2</id>
    </interactant>
    <interactant intactId="EBI-79165">
        <id>Q9NRD5</id>
        <label>PICK1</label>
    </interactant>
    <organismsDiffer>false</organismsDiffer>
    <experiments>3</experiments>
</comment>
<comment type="subcellular location">
    <subcellularLocation>
        <location evidence="3">Cell membrane</location>
        <topology evidence="3">Lipid-anchor</topology>
        <topology evidence="3">GPI-anchor</topology>
    </subcellularLocation>
    <subcellularLocation>
        <location evidence="3">Membrane raft</location>
    </subcellularLocation>
    <subcellularLocation>
        <location evidence="3">Cytoplasmic vesicle</location>
        <location evidence="3">Secretory vesicle</location>
        <location evidence="3">Acrosome</location>
    </subcellularLocation>
    <subcellularLocation>
        <location evidence="3">Secreted</location>
    </subcellularLocation>
    <subcellularLocation>
        <location evidence="3">Cytoplasmic vesicle</location>
    </subcellularLocation>
    <text evidence="3">Located on plasma membrane of spermatocytes, round and elongated spermatids, and testicular spermatozoa.</text>
</comment>
<comment type="alternative products">
    <event type="alternative splicing"/>
    <isoform>
        <id>Q9BY14-1</id>
        <name>1</name>
        <sequence type="displayed"/>
    </isoform>
    <isoform>
        <id>Q9BY14-2</id>
        <name>2</name>
        <sequence type="described" ref="VSP_020029"/>
    </isoform>
</comment>
<comment type="tissue specificity">
    <text evidence="5">Detected in testis and spermatogonia. Not detected in spermatocytes. Detected in blood leukocytes.</text>
</comment>
<comment type="PTM">
    <text evidence="3">N-glycosylated; by high mannose and/or biantennary complex and/or certain types of hybrid oligosaccharides; possesses different oligosaccharides chains according to its subcellular localization in the testis.</text>
</comment>
<comment type="PTM">
    <text evidence="3">Sheds from membrane raft by ACE and released from the cell surface of epididymal sperm while it passes through the caput epididymis leading to disappearance of TEX101 on spermatozoa; is essential to produce fertile spermatozoa.</text>
</comment>
<proteinExistence type="evidence at protein level"/>
<feature type="signal peptide" evidence="1">
    <location>
        <begin position="1"/>
        <end position="25"/>
    </location>
</feature>
<feature type="chain" id="PRO_0000247621" description="Testis-expressed protein 101">
    <location>
        <begin position="26"/>
        <end position="222"/>
    </location>
</feature>
<feature type="propeptide" id="PRO_0000247622" description="Removed in mature form" evidence="4">
    <location>
        <begin position="223"/>
        <end position="249"/>
    </location>
</feature>
<feature type="domain" description="UPAR/Ly6">
    <location>
        <begin position="140"/>
        <end position="211"/>
    </location>
</feature>
<feature type="lipid moiety-binding region" description="GPI-anchor amidated asparagine" evidence="4">
    <location>
        <position position="222"/>
    </location>
</feature>
<feature type="glycosylation site" description="N-linked (GlcNAc...) asparagine" evidence="4">
    <location>
        <position position="45"/>
    </location>
</feature>
<feature type="glycosylation site" description="N-linked (GlcNAc...) asparagine" evidence="4">
    <location>
        <position position="159"/>
    </location>
</feature>
<feature type="splice variant" id="VSP_020029" description="In isoform 2." evidence="6 7">
    <original>M</original>
    <variation>MGARQIQTSSSQTSPEEAM</variation>
    <location>
        <position position="1"/>
    </location>
</feature>
<feature type="sequence variant" id="VAR_059883" description="In dbSNP:rs35033974.">
    <original>G</original>
    <variation>V</variation>
    <location>
        <position position="99"/>
    </location>
</feature>
<feature type="sequence conflict" description="In Ref. 1; AAK28327." evidence="8" ref="1">
    <original>C</original>
    <variation>Y</variation>
    <location>
        <position position="157"/>
    </location>
</feature>
<feature type="strand" evidence="10">
    <location>
        <begin position="27"/>
        <end position="29"/>
    </location>
</feature>
<feature type="strand" evidence="10">
    <location>
        <begin position="31"/>
        <end position="39"/>
    </location>
</feature>
<feature type="helix" evidence="10">
    <location>
        <begin position="41"/>
        <end position="43"/>
    </location>
</feature>
<feature type="strand" evidence="10">
    <location>
        <begin position="51"/>
        <end position="53"/>
    </location>
</feature>
<feature type="strand" evidence="10">
    <location>
        <begin position="59"/>
        <end position="69"/>
    </location>
</feature>
<feature type="strand" evidence="10">
    <location>
        <begin position="72"/>
        <end position="84"/>
    </location>
</feature>
<feature type="strand" evidence="10">
    <location>
        <begin position="88"/>
        <end position="95"/>
    </location>
</feature>
<feature type="strand" evidence="10">
    <location>
        <begin position="97"/>
        <end position="99"/>
    </location>
</feature>
<feature type="strand" evidence="10">
    <location>
        <begin position="101"/>
        <end position="109"/>
    </location>
</feature>
<feature type="helix" evidence="10">
    <location>
        <begin position="124"/>
        <end position="126"/>
    </location>
</feature>
<feature type="strand" evidence="10">
    <location>
        <begin position="139"/>
        <end position="141"/>
    </location>
</feature>
<feature type="strand" evidence="10">
    <location>
        <begin position="143"/>
        <end position="148"/>
    </location>
</feature>
<feature type="strand" evidence="10">
    <location>
        <begin position="154"/>
        <end position="156"/>
    </location>
</feature>
<feature type="strand" evidence="10">
    <location>
        <begin position="163"/>
        <end position="173"/>
    </location>
</feature>
<feature type="strand" evidence="10">
    <location>
        <begin position="176"/>
        <end position="186"/>
    </location>
</feature>
<feature type="turn" evidence="10">
    <location>
        <begin position="193"/>
        <end position="196"/>
    </location>
</feature>
<feature type="strand" evidence="10">
    <location>
        <begin position="203"/>
        <end position="208"/>
    </location>
</feature>
<feature type="sequence variant" id="VAR_082931" description="In dbSNP:rs17849541." evidence="8">
    <original>R</original>
    <variation>M</variation>
    <location sequence="Q9BY14-2">
        <position position="4"/>
    </location>
</feature>
<organism>
    <name type="scientific">Homo sapiens</name>
    <name type="common">Human</name>
    <dbReference type="NCBI Taxonomy" id="9606"/>
    <lineage>
        <taxon>Eukaryota</taxon>
        <taxon>Metazoa</taxon>
        <taxon>Chordata</taxon>
        <taxon>Craniata</taxon>
        <taxon>Vertebrata</taxon>
        <taxon>Euteleostomi</taxon>
        <taxon>Mammalia</taxon>
        <taxon>Eutheria</taxon>
        <taxon>Euarchontoglires</taxon>
        <taxon>Primates</taxon>
        <taxon>Haplorrhini</taxon>
        <taxon>Catarrhini</taxon>
        <taxon>Hominidae</taxon>
        <taxon>Homo</taxon>
    </lineage>
</organism>
<evidence type="ECO:0000250" key="1"/>
<evidence type="ECO:0000250" key="2">
    <source>
        <dbReference type="UniProtKB" id="Q924B5"/>
    </source>
</evidence>
<evidence type="ECO:0000250" key="3">
    <source>
        <dbReference type="UniProtKB" id="Q9JMI7"/>
    </source>
</evidence>
<evidence type="ECO:0000255" key="4"/>
<evidence type="ECO:0000269" key="5">
    <source>
    </source>
</evidence>
<evidence type="ECO:0000303" key="6">
    <source>
    </source>
</evidence>
<evidence type="ECO:0000303" key="7">
    <source>
    </source>
</evidence>
<evidence type="ECO:0000305" key="8"/>
<evidence type="ECO:0000312" key="9">
    <source>
        <dbReference type="HGNC" id="HGNC:30722"/>
    </source>
</evidence>
<evidence type="ECO:0007829" key="10">
    <source>
        <dbReference type="PDB" id="7BPR"/>
    </source>
</evidence>
<sequence>MGTPRIQHLLILLVLGASLLTSGLELYCQKGLSMTVEADPANMFNWTTEEVETCDKGALCQETILIIKAGTETAILATKGCIPEGEEAITIVQHSSPPGLIVTSYSNYCEDSFCNDKDSLSQFWEFSETTASTVSTTLHCPTCVALGTCFSAPSLPCPNGTTRCYQGKLEITGGGIESSVEVKGCTAMIGCRLMSGILAVGPMFVREACPHQLLTQPRKTENGATCLPIPVWGLQLLLPLLLPSFIHFS</sequence>
<reference key="1">
    <citation type="journal article" date="2006" name="Biochem. Biophys. Res. Commun.">
        <title>A novel spermatogenesis-specific uPAR gene expressed in human and mouse testis.</title>
        <authorList>
            <person name="Teng X."/>
            <person name="Yang J."/>
            <person name="Xie Y."/>
            <person name="Ni Z."/>
            <person name="Hu R."/>
            <person name="Shi L."/>
            <person name="Lin Z."/>
            <person name="Hu L."/>
            <person name="Zhao G."/>
            <person name="Ding X."/>
            <person name="Kong X."/>
        </authorList>
    </citation>
    <scope>NUCLEOTIDE SEQUENCE [MRNA] (ISOFORMS 1 AND 2)</scope>
    <scope>TISSUE SPECIFICITY</scope>
    <source>
        <tissue>Testis</tissue>
    </source>
</reference>
<reference key="2">
    <citation type="submission" date="2000-11" db="EMBL/GenBank/DDBJ databases">
        <title>NYD-SP8: a novel gene related to human testis development.</title>
        <authorList>
            <person name="Li J.M."/>
            <person name="Zhou Z.M."/>
            <person name="Sha J.H."/>
            <person name="Lin M."/>
            <person name="Wang L.R."/>
            <person name="Zhou Y.D."/>
            <person name="Zhu H.H."/>
            <person name="Zhu H."/>
        </authorList>
    </citation>
    <scope>NUCLEOTIDE SEQUENCE [MRNA] (ISOFORM 1)</scope>
    <source>
        <tissue>Testis</tissue>
    </source>
</reference>
<reference key="3">
    <citation type="submission" date="2001-02" db="EMBL/GenBank/DDBJ databases">
        <authorList>
            <person name="Yang J."/>
            <person name="Xie Y."/>
            <person name="Ni Z."/>
            <person name="Wang Z."/>
            <person name="Zhong L."/>
            <person name="Lei H."/>
            <person name="Hu L.L."/>
            <person name="Shi L."/>
            <person name="Zhao G."/>
            <person name="Kong X."/>
        </authorList>
    </citation>
    <scope>NUCLEOTIDE SEQUENCE [MRNA] (ISOFORM 1)</scope>
    <source>
        <tissue>Testis</tissue>
    </source>
</reference>
<reference key="4">
    <citation type="journal article" date="2003" name="Genome Res.">
        <title>The secreted protein discovery initiative (SPDI), a large-scale effort to identify novel human secreted and transmembrane proteins: a bioinformatics assessment.</title>
        <authorList>
            <person name="Clark H.F."/>
            <person name="Gurney A.L."/>
            <person name="Abaya E."/>
            <person name="Baker K."/>
            <person name="Baldwin D.T."/>
            <person name="Brush J."/>
            <person name="Chen J."/>
            <person name="Chow B."/>
            <person name="Chui C."/>
            <person name="Crowley C."/>
            <person name="Currell B."/>
            <person name="Deuel B."/>
            <person name="Dowd P."/>
            <person name="Eaton D."/>
            <person name="Foster J.S."/>
            <person name="Grimaldi C."/>
            <person name="Gu Q."/>
            <person name="Hass P.E."/>
            <person name="Heldens S."/>
            <person name="Huang A."/>
            <person name="Kim H.S."/>
            <person name="Klimowski L."/>
            <person name="Jin Y."/>
            <person name="Johnson S."/>
            <person name="Lee J."/>
            <person name="Lewis L."/>
            <person name="Liao D."/>
            <person name="Mark M.R."/>
            <person name="Robbie E."/>
            <person name="Sanchez C."/>
            <person name="Schoenfeld J."/>
            <person name="Seshagiri S."/>
            <person name="Simmons L."/>
            <person name="Singh J."/>
            <person name="Smith V."/>
            <person name="Stinson J."/>
            <person name="Vagts A."/>
            <person name="Vandlen R.L."/>
            <person name="Watanabe C."/>
            <person name="Wieand D."/>
            <person name="Woods K."/>
            <person name="Xie M.-H."/>
            <person name="Yansura D.G."/>
            <person name="Yi S."/>
            <person name="Yu G."/>
            <person name="Yuan J."/>
            <person name="Zhang M."/>
            <person name="Zhang Z."/>
            <person name="Goddard A.D."/>
            <person name="Wood W.I."/>
            <person name="Godowski P.J."/>
            <person name="Gray A.M."/>
        </authorList>
    </citation>
    <scope>NUCLEOTIDE SEQUENCE [LARGE SCALE MRNA] (ISOFORM 1)</scope>
</reference>
<reference key="5">
    <citation type="journal article" date="2004" name="Genome Res.">
        <title>The status, quality, and expansion of the NIH full-length cDNA project: the Mammalian Gene Collection (MGC).</title>
        <authorList>
            <consortium name="The MGC Project Team"/>
        </authorList>
    </citation>
    <scope>NUCLEOTIDE SEQUENCE [LARGE SCALE MRNA] (ISOFORM 2)</scope>
    <source>
        <tissue>Lung</tissue>
    </source>
</reference>